<keyword id="KW-0030">Aminoacyl-tRNA synthetase</keyword>
<keyword id="KW-0067">ATP-binding</keyword>
<keyword id="KW-0963">Cytoplasm</keyword>
<keyword id="KW-0436">Ligase</keyword>
<keyword id="KW-0547">Nucleotide-binding</keyword>
<keyword id="KW-0648">Protein biosynthesis</keyword>
<keyword id="KW-1185">Reference proteome</keyword>
<dbReference type="EC" id="6.1.1.15" evidence="1"/>
<dbReference type="EMBL" id="CP000822">
    <property type="protein sequence ID" value="ABV14257.1"/>
    <property type="molecule type" value="Genomic_DNA"/>
</dbReference>
<dbReference type="RefSeq" id="WP_012133963.1">
    <property type="nucleotide sequence ID" value="NC_009792.1"/>
</dbReference>
<dbReference type="SMR" id="A8AL94"/>
<dbReference type="STRING" id="290338.CKO_03172"/>
<dbReference type="GeneID" id="45136957"/>
<dbReference type="KEGG" id="cko:CKO_03172"/>
<dbReference type="HOGENOM" id="CLU_016739_0_0_6"/>
<dbReference type="OrthoDB" id="9809052at2"/>
<dbReference type="Proteomes" id="UP000008148">
    <property type="component" value="Chromosome"/>
</dbReference>
<dbReference type="GO" id="GO:0005829">
    <property type="term" value="C:cytosol"/>
    <property type="evidence" value="ECO:0007669"/>
    <property type="project" value="TreeGrafter"/>
</dbReference>
<dbReference type="GO" id="GO:0002161">
    <property type="term" value="F:aminoacyl-tRNA deacylase activity"/>
    <property type="evidence" value="ECO:0007669"/>
    <property type="project" value="InterPro"/>
</dbReference>
<dbReference type="GO" id="GO:0005524">
    <property type="term" value="F:ATP binding"/>
    <property type="evidence" value="ECO:0007669"/>
    <property type="project" value="UniProtKB-UniRule"/>
</dbReference>
<dbReference type="GO" id="GO:0004827">
    <property type="term" value="F:proline-tRNA ligase activity"/>
    <property type="evidence" value="ECO:0007669"/>
    <property type="project" value="UniProtKB-UniRule"/>
</dbReference>
<dbReference type="GO" id="GO:0006433">
    <property type="term" value="P:prolyl-tRNA aminoacylation"/>
    <property type="evidence" value="ECO:0007669"/>
    <property type="project" value="UniProtKB-UniRule"/>
</dbReference>
<dbReference type="CDD" id="cd04334">
    <property type="entry name" value="ProRS-INS"/>
    <property type="match status" value="1"/>
</dbReference>
<dbReference type="CDD" id="cd00861">
    <property type="entry name" value="ProRS_anticodon_short"/>
    <property type="match status" value="1"/>
</dbReference>
<dbReference type="CDD" id="cd00779">
    <property type="entry name" value="ProRS_core_prok"/>
    <property type="match status" value="1"/>
</dbReference>
<dbReference type="FunFam" id="3.30.930.10:FF:000012">
    <property type="entry name" value="Proline--tRNA ligase"/>
    <property type="match status" value="1"/>
</dbReference>
<dbReference type="FunFam" id="3.30.930.10:FF:000097">
    <property type="entry name" value="Proline--tRNA ligase"/>
    <property type="match status" value="1"/>
</dbReference>
<dbReference type="FunFam" id="3.40.50.800:FF:000006">
    <property type="entry name" value="Proline--tRNA ligase"/>
    <property type="match status" value="1"/>
</dbReference>
<dbReference type="FunFam" id="3.90.960.10:FF:000001">
    <property type="entry name" value="Proline--tRNA ligase"/>
    <property type="match status" value="1"/>
</dbReference>
<dbReference type="Gene3D" id="3.40.50.800">
    <property type="entry name" value="Anticodon-binding domain"/>
    <property type="match status" value="1"/>
</dbReference>
<dbReference type="Gene3D" id="3.30.930.10">
    <property type="entry name" value="Bira Bifunctional Protein, Domain 2"/>
    <property type="match status" value="2"/>
</dbReference>
<dbReference type="Gene3D" id="3.90.960.10">
    <property type="entry name" value="YbaK/aminoacyl-tRNA synthetase-associated domain"/>
    <property type="match status" value="1"/>
</dbReference>
<dbReference type="HAMAP" id="MF_01569">
    <property type="entry name" value="Pro_tRNA_synth_type1"/>
    <property type="match status" value="1"/>
</dbReference>
<dbReference type="InterPro" id="IPR002314">
    <property type="entry name" value="aa-tRNA-synt_IIb"/>
</dbReference>
<dbReference type="InterPro" id="IPR006195">
    <property type="entry name" value="aa-tRNA-synth_II"/>
</dbReference>
<dbReference type="InterPro" id="IPR045864">
    <property type="entry name" value="aa-tRNA-synth_II/BPL/LPL"/>
</dbReference>
<dbReference type="InterPro" id="IPR004154">
    <property type="entry name" value="Anticodon-bd"/>
</dbReference>
<dbReference type="InterPro" id="IPR036621">
    <property type="entry name" value="Anticodon-bd_dom_sf"/>
</dbReference>
<dbReference type="InterPro" id="IPR002316">
    <property type="entry name" value="Pro-tRNA-ligase_IIa"/>
</dbReference>
<dbReference type="InterPro" id="IPR004500">
    <property type="entry name" value="Pro-tRNA-synth_IIa_bac-type"/>
</dbReference>
<dbReference type="InterPro" id="IPR023717">
    <property type="entry name" value="Pro-tRNA-Synthase_IIa_type1"/>
</dbReference>
<dbReference type="InterPro" id="IPR050062">
    <property type="entry name" value="Pro-tRNA_synthetase"/>
</dbReference>
<dbReference type="InterPro" id="IPR044140">
    <property type="entry name" value="ProRS_anticodon_short"/>
</dbReference>
<dbReference type="InterPro" id="IPR033730">
    <property type="entry name" value="ProRS_core_prok"/>
</dbReference>
<dbReference type="InterPro" id="IPR036754">
    <property type="entry name" value="YbaK/aa-tRNA-synt-asso_dom_sf"/>
</dbReference>
<dbReference type="InterPro" id="IPR007214">
    <property type="entry name" value="YbaK/aa-tRNA-synth-assoc-dom"/>
</dbReference>
<dbReference type="NCBIfam" id="NF006625">
    <property type="entry name" value="PRK09194.1"/>
    <property type="match status" value="1"/>
</dbReference>
<dbReference type="NCBIfam" id="TIGR00409">
    <property type="entry name" value="proS_fam_II"/>
    <property type="match status" value="1"/>
</dbReference>
<dbReference type="PANTHER" id="PTHR42753">
    <property type="entry name" value="MITOCHONDRIAL RIBOSOME PROTEIN L39/PROLYL-TRNA LIGASE FAMILY MEMBER"/>
    <property type="match status" value="1"/>
</dbReference>
<dbReference type="PANTHER" id="PTHR42753:SF2">
    <property type="entry name" value="PROLINE--TRNA LIGASE"/>
    <property type="match status" value="1"/>
</dbReference>
<dbReference type="Pfam" id="PF03129">
    <property type="entry name" value="HGTP_anticodon"/>
    <property type="match status" value="1"/>
</dbReference>
<dbReference type="Pfam" id="PF00587">
    <property type="entry name" value="tRNA-synt_2b"/>
    <property type="match status" value="1"/>
</dbReference>
<dbReference type="Pfam" id="PF04073">
    <property type="entry name" value="tRNA_edit"/>
    <property type="match status" value="1"/>
</dbReference>
<dbReference type="PIRSF" id="PIRSF001535">
    <property type="entry name" value="ProRS_1"/>
    <property type="match status" value="1"/>
</dbReference>
<dbReference type="PRINTS" id="PR01046">
    <property type="entry name" value="TRNASYNTHPRO"/>
</dbReference>
<dbReference type="SUPFAM" id="SSF52954">
    <property type="entry name" value="Class II aaRS ABD-related"/>
    <property type="match status" value="1"/>
</dbReference>
<dbReference type="SUPFAM" id="SSF55681">
    <property type="entry name" value="Class II aaRS and biotin synthetases"/>
    <property type="match status" value="1"/>
</dbReference>
<dbReference type="SUPFAM" id="SSF55826">
    <property type="entry name" value="YbaK/ProRS associated domain"/>
    <property type="match status" value="1"/>
</dbReference>
<dbReference type="PROSITE" id="PS50862">
    <property type="entry name" value="AA_TRNA_LIGASE_II"/>
    <property type="match status" value="1"/>
</dbReference>
<gene>
    <name evidence="1" type="primary">proS</name>
    <name type="ordered locus">CKO_03172</name>
</gene>
<reference key="1">
    <citation type="submission" date="2007-08" db="EMBL/GenBank/DDBJ databases">
        <authorList>
            <consortium name="The Citrobacter koseri Genome Sequencing Project"/>
            <person name="McClelland M."/>
            <person name="Sanderson E.K."/>
            <person name="Porwollik S."/>
            <person name="Spieth J."/>
            <person name="Clifton W.S."/>
            <person name="Latreille P."/>
            <person name="Courtney L."/>
            <person name="Wang C."/>
            <person name="Pepin K."/>
            <person name="Bhonagiri V."/>
            <person name="Nash W."/>
            <person name="Johnson M."/>
            <person name="Thiruvilangam P."/>
            <person name="Wilson R."/>
        </authorList>
    </citation>
    <scope>NUCLEOTIDE SEQUENCE [LARGE SCALE GENOMIC DNA]</scope>
    <source>
        <strain>ATCC BAA-895 / CDC 4225-83 / SGSC4696</strain>
    </source>
</reference>
<protein>
    <recommendedName>
        <fullName evidence="1">Proline--tRNA ligase</fullName>
        <ecNumber evidence="1">6.1.1.15</ecNumber>
    </recommendedName>
    <alternativeName>
        <fullName evidence="1">Prolyl-tRNA synthetase</fullName>
        <shortName evidence="1">ProRS</shortName>
    </alternativeName>
</protein>
<sequence>MRTSQYLLSTLKETPADAEVISHQLMLRAGMIRKLASGLYTWLPTGLRVLKKVENIVREEMNNAGAIEVSMPVVQPADLWQESGRWEQYGPELLRFVDRGERPFVLGPTHEEVITDLIRNELSSYKQLPLNFFQIQTKFRDEVRPRFGVMRSREFLMKDAYSFHTSQESLQETYDAMYAAYSKIFSRMGLDFRAVQADTGSIGGNASHEFQVLAQSGEDDVIFSDSSDYAANIEFAEAVAPKAPRAAASQEMTLVDTPNAKTIAELVEQFNLPIEKTVKTLLVKAVEGSSYPLVALLVRGDHELNEVKAEKLPQVASPLTFATEEEIRALVKAGPGSLGPVNMPVPVVIDRTVAVMSDFAAGANIDGKHYFGINWDRDVATPEVADIRNVVAGDPSPDGQGTLLIKRGIEVGHIFQLGTKYSEALKASVQGEDGRNQILTMGCYGIGVTRVVAAAIEQNYDERGIVWPDAIAPFQVAILPMNMHKSFRVQELAEKLYGELRAQGIEVLMDDRKERPGVMFADMELIGIPHTIVLGDRNLDNDDIEYKYRRNGEKQLIKTGEIVDFLVKAIKG</sequence>
<evidence type="ECO:0000255" key="1">
    <source>
        <dbReference type="HAMAP-Rule" id="MF_01569"/>
    </source>
</evidence>
<name>SYP_CITK8</name>
<organism>
    <name type="scientific">Citrobacter koseri (strain ATCC BAA-895 / CDC 4225-83 / SGSC4696)</name>
    <dbReference type="NCBI Taxonomy" id="290338"/>
    <lineage>
        <taxon>Bacteria</taxon>
        <taxon>Pseudomonadati</taxon>
        <taxon>Pseudomonadota</taxon>
        <taxon>Gammaproteobacteria</taxon>
        <taxon>Enterobacterales</taxon>
        <taxon>Enterobacteriaceae</taxon>
        <taxon>Citrobacter</taxon>
    </lineage>
</organism>
<comment type="function">
    <text evidence="1">Catalyzes the attachment of proline to tRNA(Pro) in a two-step reaction: proline is first activated by ATP to form Pro-AMP and then transferred to the acceptor end of tRNA(Pro). As ProRS can inadvertently accommodate and process non-cognate amino acids such as alanine and cysteine, to avoid such errors it has two additional distinct editing activities against alanine. One activity is designated as 'pretransfer' editing and involves the tRNA(Pro)-independent hydrolysis of activated Ala-AMP. The other activity is designated 'posttransfer' editing and involves deacylation of mischarged Ala-tRNA(Pro). The misacylated Cys-tRNA(Pro) is not edited by ProRS.</text>
</comment>
<comment type="catalytic activity">
    <reaction evidence="1">
        <text>tRNA(Pro) + L-proline + ATP = L-prolyl-tRNA(Pro) + AMP + diphosphate</text>
        <dbReference type="Rhea" id="RHEA:14305"/>
        <dbReference type="Rhea" id="RHEA-COMP:9700"/>
        <dbReference type="Rhea" id="RHEA-COMP:9702"/>
        <dbReference type="ChEBI" id="CHEBI:30616"/>
        <dbReference type="ChEBI" id="CHEBI:33019"/>
        <dbReference type="ChEBI" id="CHEBI:60039"/>
        <dbReference type="ChEBI" id="CHEBI:78442"/>
        <dbReference type="ChEBI" id="CHEBI:78532"/>
        <dbReference type="ChEBI" id="CHEBI:456215"/>
        <dbReference type="EC" id="6.1.1.15"/>
    </reaction>
</comment>
<comment type="subunit">
    <text evidence="1">Homodimer.</text>
</comment>
<comment type="subcellular location">
    <subcellularLocation>
        <location evidence="1">Cytoplasm</location>
    </subcellularLocation>
</comment>
<comment type="domain">
    <text evidence="1">Consists of three domains: the N-terminal catalytic domain, the editing domain and the C-terminal anticodon-binding domain.</text>
</comment>
<comment type="similarity">
    <text evidence="1">Belongs to the class-II aminoacyl-tRNA synthetase family. ProS type 1 subfamily.</text>
</comment>
<feature type="chain" id="PRO_1000069132" description="Proline--tRNA ligase">
    <location>
        <begin position="1"/>
        <end position="572"/>
    </location>
</feature>
<proteinExistence type="inferred from homology"/>
<accession>A8AL94</accession>